<organism>
    <name type="scientific">Pseudomonas savastanoi pv. phaseolicola (strain 1448A / Race 6)</name>
    <name type="common">Pseudomonas syringae pv. phaseolicola (strain 1448A / Race 6)</name>
    <dbReference type="NCBI Taxonomy" id="264730"/>
    <lineage>
        <taxon>Bacteria</taxon>
        <taxon>Pseudomonadati</taxon>
        <taxon>Pseudomonadota</taxon>
        <taxon>Gammaproteobacteria</taxon>
        <taxon>Pseudomonadales</taxon>
        <taxon>Pseudomonadaceae</taxon>
        <taxon>Pseudomonas</taxon>
    </lineage>
</organism>
<feature type="chain" id="PRO_0000237914" description="Shikimate kinase">
    <location>
        <begin position="1"/>
        <end position="172"/>
    </location>
</feature>
<feature type="binding site" evidence="1">
    <location>
        <begin position="11"/>
        <end position="16"/>
    </location>
    <ligand>
        <name>ATP</name>
        <dbReference type="ChEBI" id="CHEBI:30616"/>
    </ligand>
</feature>
<feature type="binding site" evidence="1">
    <location>
        <position position="15"/>
    </location>
    <ligand>
        <name>Mg(2+)</name>
        <dbReference type="ChEBI" id="CHEBI:18420"/>
    </ligand>
</feature>
<feature type="binding site" evidence="1">
    <location>
        <position position="33"/>
    </location>
    <ligand>
        <name>substrate</name>
    </ligand>
</feature>
<feature type="binding site" evidence="1">
    <location>
        <position position="57"/>
    </location>
    <ligand>
        <name>substrate</name>
    </ligand>
</feature>
<feature type="binding site" evidence="1">
    <location>
        <position position="79"/>
    </location>
    <ligand>
        <name>substrate</name>
    </ligand>
</feature>
<feature type="binding site" evidence="1">
    <location>
        <position position="117"/>
    </location>
    <ligand>
        <name>ATP</name>
        <dbReference type="ChEBI" id="CHEBI:30616"/>
    </ligand>
</feature>
<feature type="binding site" evidence="1">
    <location>
        <position position="136"/>
    </location>
    <ligand>
        <name>substrate</name>
    </ligand>
</feature>
<feature type="binding site" evidence="1">
    <location>
        <position position="153"/>
    </location>
    <ligand>
        <name>ATP</name>
        <dbReference type="ChEBI" id="CHEBI:30616"/>
    </ligand>
</feature>
<dbReference type="EC" id="2.7.1.71" evidence="1"/>
<dbReference type="EMBL" id="CP000058">
    <property type="protein sequence ID" value="AAZ33291.1"/>
    <property type="molecule type" value="Genomic_DNA"/>
</dbReference>
<dbReference type="RefSeq" id="WP_002551657.1">
    <property type="nucleotide sequence ID" value="NC_005773.3"/>
</dbReference>
<dbReference type="SMR" id="Q48PH1"/>
<dbReference type="GeneID" id="61867744"/>
<dbReference type="KEGG" id="psp:PSPPH_0395"/>
<dbReference type="eggNOG" id="COG0703">
    <property type="taxonomic scope" value="Bacteria"/>
</dbReference>
<dbReference type="HOGENOM" id="CLU_057607_2_2_6"/>
<dbReference type="UniPathway" id="UPA00053">
    <property type="reaction ID" value="UER00088"/>
</dbReference>
<dbReference type="Proteomes" id="UP000000551">
    <property type="component" value="Chromosome"/>
</dbReference>
<dbReference type="GO" id="GO:0005829">
    <property type="term" value="C:cytosol"/>
    <property type="evidence" value="ECO:0007669"/>
    <property type="project" value="TreeGrafter"/>
</dbReference>
<dbReference type="GO" id="GO:0005524">
    <property type="term" value="F:ATP binding"/>
    <property type="evidence" value="ECO:0007669"/>
    <property type="project" value="UniProtKB-UniRule"/>
</dbReference>
<dbReference type="GO" id="GO:0000287">
    <property type="term" value="F:magnesium ion binding"/>
    <property type="evidence" value="ECO:0007669"/>
    <property type="project" value="UniProtKB-UniRule"/>
</dbReference>
<dbReference type="GO" id="GO:0004765">
    <property type="term" value="F:shikimate kinase activity"/>
    <property type="evidence" value="ECO:0007669"/>
    <property type="project" value="UniProtKB-UniRule"/>
</dbReference>
<dbReference type="GO" id="GO:0008652">
    <property type="term" value="P:amino acid biosynthetic process"/>
    <property type="evidence" value="ECO:0007669"/>
    <property type="project" value="UniProtKB-KW"/>
</dbReference>
<dbReference type="GO" id="GO:0009073">
    <property type="term" value="P:aromatic amino acid family biosynthetic process"/>
    <property type="evidence" value="ECO:0007669"/>
    <property type="project" value="UniProtKB-KW"/>
</dbReference>
<dbReference type="GO" id="GO:0009423">
    <property type="term" value="P:chorismate biosynthetic process"/>
    <property type="evidence" value="ECO:0007669"/>
    <property type="project" value="UniProtKB-UniRule"/>
</dbReference>
<dbReference type="CDD" id="cd00464">
    <property type="entry name" value="SK"/>
    <property type="match status" value="1"/>
</dbReference>
<dbReference type="Gene3D" id="3.40.50.300">
    <property type="entry name" value="P-loop containing nucleotide triphosphate hydrolases"/>
    <property type="match status" value="1"/>
</dbReference>
<dbReference type="HAMAP" id="MF_00109">
    <property type="entry name" value="Shikimate_kinase"/>
    <property type="match status" value="1"/>
</dbReference>
<dbReference type="InterPro" id="IPR027417">
    <property type="entry name" value="P-loop_NTPase"/>
</dbReference>
<dbReference type="InterPro" id="IPR031322">
    <property type="entry name" value="Shikimate/glucono_kinase"/>
</dbReference>
<dbReference type="InterPro" id="IPR000623">
    <property type="entry name" value="Shikimate_kinase/TSH1"/>
</dbReference>
<dbReference type="InterPro" id="IPR023000">
    <property type="entry name" value="Shikimate_kinase_CS"/>
</dbReference>
<dbReference type="NCBIfam" id="NF003456">
    <property type="entry name" value="PRK05057.1"/>
    <property type="match status" value="1"/>
</dbReference>
<dbReference type="PANTHER" id="PTHR21087">
    <property type="entry name" value="SHIKIMATE KINASE"/>
    <property type="match status" value="1"/>
</dbReference>
<dbReference type="PANTHER" id="PTHR21087:SF16">
    <property type="entry name" value="SHIKIMATE KINASE 1, CHLOROPLASTIC"/>
    <property type="match status" value="1"/>
</dbReference>
<dbReference type="Pfam" id="PF01202">
    <property type="entry name" value="SKI"/>
    <property type="match status" value="1"/>
</dbReference>
<dbReference type="PRINTS" id="PR01100">
    <property type="entry name" value="SHIKIMTKNASE"/>
</dbReference>
<dbReference type="SUPFAM" id="SSF52540">
    <property type="entry name" value="P-loop containing nucleoside triphosphate hydrolases"/>
    <property type="match status" value="1"/>
</dbReference>
<dbReference type="PROSITE" id="PS01128">
    <property type="entry name" value="SHIKIMATE_KINASE"/>
    <property type="match status" value="1"/>
</dbReference>
<name>AROK_PSE14</name>
<keyword id="KW-0028">Amino-acid biosynthesis</keyword>
<keyword id="KW-0057">Aromatic amino acid biosynthesis</keyword>
<keyword id="KW-0067">ATP-binding</keyword>
<keyword id="KW-0963">Cytoplasm</keyword>
<keyword id="KW-0418">Kinase</keyword>
<keyword id="KW-0460">Magnesium</keyword>
<keyword id="KW-0479">Metal-binding</keyword>
<keyword id="KW-0547">Nucleotide-binding</keyword>
<keyword id="KW-0808">Transferase</keyword>
<proteinExistence type="inferred from homology"/>
<reference key="1">
    <citation type="journal article" date="2005" name="J. Bacteriol.">
        <title>Whole-genome sequence analysis of Pseudomonas syringae pv. phaseolicola 1448A reveals divergence among pathovars in genes involved in virulence and transposition.</title>
        <authorList>
            <person name="Joardar V."/>
            <person name="Lindeberg M."/>
            <person name="Jackson R.W."/>
            <person name="Selengut J."/>
            <person name="Dodson R."/>
            <person name="Brinkac L.M."/>
            <person name="Daugherty S.C."/>
            <person name="DeBoy R.T."/>
            <person name="Durkin A.S."/>
            <person name="Gwinn Giglio M."/>
            <person name="Madupu R."/>
            <person name="Nelson W.C."/>
            <person name="Rosovitz M.J."/>
            <person name="Sullivan S.A."/>
            <person name="Crabtree J."/>
            <person name="Creasy T."/>
            <person name="Davidsen T.M."/>
            <person name="Haft D.H."/>
            <person name="Zafar N."/>
            <person name="Zhou L."/>
            <person name="Halpin R."/>
            <person name="Holley T."/>
            <person name="Khouri H.M."/>
            <person name="Feldblyum T.V."/>
            <person name="White O."/>
            <person name="Fraser C.M."/>
            <person name="Chatterjee A.K."/>
            <person name="Cartinhour S."/>
            <person name="Schneider D."/>
            <person name="Mansfield J.W."/>
            <person name="Collmer A."/>
            <person name="Buell R."/>
        </authorList>
    </citation>
    <scope>NUCLEOTIDE SEQUENCE [LARGE SCALE GENOMIC DNA]</scope>
    <source>
        <strain>1448A / Race 6</strain>
    </source>
</reference>
<sequence>MRNLILVGPMGAGKSTIGRLLAKELRLPFKDSDKEIELRTGANIPWIFDKEGEPGFREREQAMIAELCEADGLVLATGGGAVMRGENRQALRAGGRVVYLHASIEQQVGRTARDRNRPLLRTADPARVLSELLAIRDPLYREIADVVIETDERPPRMVVLEILARLAELPPR</sequence>
<accession>Q48PH1</accession>
<comment type="function">
    <text evidence="1">Catalyzes the specific phosphorylation of the 3-hydroxyl group of shikimic acid using ATP as a cosubstrate.</text>
</comment>
<comment type="catalytic activity">
    <reaction evidence="1">
        <text>shikimate + ATP = 3-phosphoshikimate + ADP + H(+)</text>
        <dbReference type="Rhea" id="RHEA:13121"/>
        <dbReference type="ChEBI" id="CHEBI:15378"/>
        <dbReference type="ChEBI" id="CHEBI:30616"/>
        <dbReference type="ChEBI" id="CHEBI:36208"/>
        <dbReference type="ChEBI" id="CHEBI:145989"/>
        <dbReference type="ChEBI" id="CHEBI:456216"/>
        <dbReference type="EC" id="2.7.1.71"/>
    </reaction>
</comment>
<comment type="cofactor">
    <cofactor evidence="1">
        <name>Mg(2+)</name>
        <dbReference type="ChEBI" id="CHEBI:18420"/>
    </cofactor>
    <text evidence="1">Binds 1 Mg(2+) ion per subunit.</text>
</comment>
<comment type="pathway">
    <text evidence="1">Metabolic intermediate biosynthesis; chorismate biosynthesis; chorismate from D-erythrose 4-phosphate and phosphoenolpyruvate: step 5/7.</text>
</comment>
<comment type="subunit">
    <text evidence="1">Monomer.</text>
</comment>
<comment type="subcellular location">
    <subcellularLocation>
        <location evidence="1">Cytoplasm</location>
    </subcellularLocation>
</comment>
<comment type="similarity">
    <text evidence="1">Belongs to the shikimate kinase family.</text>
</comment>
<evidence type="ECO:0000255" key="1">
    <source>
        <dbReference type="HAMAP-Rule" id="MF_00109"/>
    </source>
</evidence>
<gene>
    <name evidence="1" type="primary">aroK</name>
    <name type="ordered locus">PSPPH_0395</name>
</gene>
<protein>
    <recommendedName>
        <fullName evidence="1">Shikimate kinase</fullName>
        <shortName evidence="1">SK</shortName>
        <ecNumber evidence="1">2.7.1.71</ecNumber>
    </recommendedName>
</protein>